<proteinExistence type="evidence at protein level"/>
<organism>
    <name type="scientific">Arabidopsis thaliana</name>
    <name type="common">Mouse-ear cress</name>
    <dbReference type="NCBI Taxonomy" id="3702"/>
    <lineage>
        <taxon>Eukaryota</taxon>
        <taxon>Viridiplantae</taxon>
        <taxon>Streptophyta</taxon>
        <taxon>Embryophyta</taxon>
        <taxon>Tracheophyta</taxon>
        <taxon>Spermatophyta</taxon>
        <taxon>Magnoliopsida</taxon>
        <taxon>eudicotyledons</taxon>
        <taxon>Gunneridae</taxon>
        <taxon>Pentapetalae</taxon>
        <taxon>rosids</taxon>
        <taxon>malvids</taxon>
        <taxon>Brassicales</taxon>
        <taxon>Brassicaceae</taxon>
        <taxon>Camelineae</taxon>
        <taxon>Arabidopsis</taxon>
    </lineage>
</organism>
<comment type="subunit">
    <text evidence="5">Homodimer.</text>
</comment>
<comment type="interaction">
    <interactant intactId="EBI-15192637">
        <id>Q9C7T4</id>
    </interactant>
    <interactant intactId="EBI-15192535">
        <id>F4JI72</id>
        <label>At4g03250</label>
    </interactant>
    <organismsDiffer>false</organismsDiffer>
    <experiments>3</experiments>
</comment>
<comment type="interaction">
    <interactant intactId="EBI-15192637">
        <id>Q9C7T4</id>
    </interactant>
    <interactant intactId="EBI-15197899">
        <id>Q58G01</id>
        <label>BHLH155</label>
    </interactant>
    <organismsDiffer>false</organismsDiffer>
    <experiments>3</experiments>
</comment>
<comment type="interaction">
    <interactant intactId="EBI-15192637">
        <id>Q9C7T4</id>
    </interactant>
    <interactant intactId="EBI-15191643">
        <id>F4JIJ7</id>
        <label>BHLH162</label>
    </interactant>
    <organismsDiffer>false</organismsDiffer>
    <experiments>4</experiments>
</comment>
<comment type="interaction">
    <interactant intactId="EBI-15192637">
        <id>Q9C7T4</id>
    </interactant>
    <interactant intactId="EBI-2000137">
        <id>Q9MAI5</id>
        <label>ERF8</label>
    </interactant>
    <organismsDiffer>false</organismsDiffer>
    <experiments>3</experiments>
</comment>
<comment type="interaction">
    <interactant intactId="EBI-15192637">
        <id>Q9C7T4</id>
    </interactant>
    <interactant intactId="EBI-2429535">
        <id>Q9FGM1</id>
        <label>PYL8</label>
    </interactant>
    <organismsDiffer>false</organismsDiffer>
    <experiments>3</experiments>
</comment>
<comment type="interaction">
    <interactant intactId="EBI-15192637">
        <id>Q9C7T4</id>
    </interactant>
    <interactant intactId="EBI-2349513">
        <id>Q84MC7</id>
        <label>PYL9</label>
    </interactant>
    <organismsDiffer>false</organismsDiffer>
    <experiments>3</experiments>
</comment>
<comment type="interaction">
    <interactant intactId="EBI-15192637">
        <id>Q9C7T4</id>
    </interactant>
    <interactant intactId="EBI-3133327">
        <id>O82277</id>
        <label>TCP10</label>
    </interactant>
    <organismsDiffer>false</organismsDiffer>
    <experiments>4</experiments>
</comment>
<comment type="interaction">
    <interactant intactId="EBI-15192637">
        <id>Q9C7T4</id>
    </interactant>
    <interactant intactId="EBI-4424563">
        <id>Q93Z00</id>
        <label>TCP14</label>
    </interactant>
    <organismsDiffer>false</organismsDiffer>
    <experiments>3</experiments>
</comment>
<comment type="interaction">
    <interactant intactId="EBI-15192637">
        <id>Q9C7T4</id>
    </interactant>
    <interactant intactId="EBI-15192325">
        <id>Q8LPR5</id>
        <label>TCP4</label>
    </interactant>
    <organismsDiffer>false</organismsDiffer>
    <experiments>3</experiments>
</comment>
<comment type="subcellular location">
    <subcellularLocation>
        <location evidence="1">Nucleus</location>
    </subcellularLocation>
</comment>
<comment type="tissue specificity">
    <text evidence="4">Expressed constitutively in roots, leaves, stems, and flowers.</text>
</comment>
<name>BH096_ARATH</name>
<keyword id="KW-0238">DNA-binding</keyword>
<keyword id="KW-0539">Nucleus</keyword>
<keyword id="KW-1185">Reference proteome</keyword>
<keyword id="KW-0804">Transcription</keyword>
<keyword id="KW-0805">Transcription regulation</keyword>
<protein>
    <recommendedName>
        <fullName>Transcription factor bHLH96</fullName>
    </recommendedName>
    <alternativeName>
        <fullName>Basic helix-loop-helix protein 96</fullName>
        <shortName>AtbHLH96</shortName>
        <shortName>bHLH 96</shortName>
    </alternativeName>
    <alternativeName>
        <fullName>Transcription factor EN 15</fullName>
    </alternativeName>
    <alternativeName>
        <fullName>bHLH transcription factor bHLH096</fullName>
    </alternativeName>
</protein>
<feature type="chain" id="PRO_0000358787" description="Transcription factor bHLH96">
    <location>
        <begin position="1"/>
        <end position="320"/>
    </location>
</feature>
<feature type="domain" description="bHLH" evidence="1">
    <location>
        <begin position="122"/>
        <end position="173"/>
    </location>
</feature>
<feature type="domain" description="ACT" evidence="2">
    <location>
        <begin position="244"/>
        <end position="320"/>
    </location>
</feature>
<feature type="region of interest" description="Disordered" evidence="3">
    <location>
        <begin position="30"/>
        <end position="121"/>
    </location>
</feature>
<feature type="region of interest" description="Disordered" evidence="3">
    <location>
        <begin position="184"/>
        <end position="206"/>
    </location>
</feature>
<feature type="compositionally biased region" description="Acidic residues" evidence="3">
    <location>
        <begin position="65"/>
        <end position="76"/>
    </location>
</feature>
<feature type="compositionally biased region" description="Basic residues" evidence="3">
    <location>
        <begin position="104"/>
        <end position="114"/>
    </location>
</feature>
<evidence type="ECO:0000255" key="1">
    <source>
        <dbReference type="PROSITE-ProRule" id="PRU00981"/>
    </source>
</evidence>
<evidence type="ECO:0000255" key="2">
    <source>
        <dbReference type="PROSITE-ProRule" id="PRU01007"/>
    </source>
</evidence>
<evidence type="ECO:0000256" key="3">
    <source>
        <dbReference type="SAM" id="MobiDB-lite"/>
    </source>
</evidence>
<evidence type="ECO:0000269" key="4">
    <source>
    </source>
</evidence>
<evidence type="ECO:0000305" key="5"/>
<gene>
    <name type="primary">BHLH96</name>
    <name type="synonym">EN15</name>
    <name type="ordered locus">At1g72210</name>
    <name type="ORF">T9N14.4</name>
</gene>
<dbReference type="EMBL" id="AJ459771">
    <property type="protein sequence ID" value="CAD30833.1"/>
    <property type="molecule type" value="mRNA"/>
</dbReference>
<dbReference type="EMBL" id="AC067754">
    <property type="protein sequence ID" value="AAG51804.1"/>
    <property type="molecule type" value="Genomic_DNA"/>
</dbReference>
<dbReference type="EMBL" id="CP002684">
    <property type="protein sequence ID" value="AEE35289.1"/>
    <property type="molecule type" value="Genomic_DNA"/>
</dbReference>
<dbReference type="EMBL" id="BT003871">
    <property type="protein sequence ID" value="AAO41920.1"/>
    <property type="molecule type" value="mRNA"/>
</dbReference>
<dbReference type="EMBL" id="BT006086">
    <property type="protein sequence ID" value="AAP04071.1"/>
    <property type="molecule type" value="mRNA"/>
</dbReference>
<dbReference type="PIR" id="F96745">
    <property type="entry name" value="F96745"/>
</dbReference>
<dbReference type="RefSeq" id="NP_177366.1">
    <property type="nucleotide sequence ID" value="NM_105880.4"/>
</dbReference>
<dbReference type="SMR" id="Q9C7T4"/>
<dbReference type="BioGRID" id="28773">
    <property type="interactions" value="62"/>
</dbReference>
<dbReference type="FunCoup" id="Q9C7T4">
    <property type="interactions" value="122"/>
</dbReference>
<dbReference type="IntAct" id="Q9C7T4">
    <property type="interactions" value="60"/>
</dbReference>
<dbReference type="STRING" id="3702.Q9C7T4"/>
<dbReference type="PaxDb" id="3702-AT1G72210.1"/>
<dbReference type="EnsemblPlants" id="AT1G72210.1">
    <property type="protein sequence ID" value="AT1G72210.1"/>
    <property type="gene ID" value="AT1G72210"/>
</dbReference>
<dbReference type="GeneID" id="843553"/>
<dbReference type="Gramene" id="AT1G72210.1">
    <property type="protein sequence ID" value="AT1G72210.1"/>
    <property type="gene ID" value="AT1G72210"/>
</dbReference>
<dbReference type="KEGG" id="ath:AT1G72210"/>
<dbReference type="Araport" id="AT1G72210"/>
<dbReference type="TAIR" id="AT1G72210">
    <property type="gene designation" value="BHLH096"/>
</dbReference>
<dbReference type="eggNOG" id="ENOG502QSWD">
    <property type="taxonomic scope" value="Eukaryota"/>
</dbReference>
<dbReference type="HOGENOM" id="CLU_044652_1_0_1"/>
<dbReference type="InParanoid" id="Q9C7T4"/>
<dbReference type="OMA" id="KEYSWDP"/>
<dbReference type="PhylomeDB" id="Q9C7T4"/>
<dbReference type="PRO" id="PR:Q9C7T4"/>
<dbReference type="Proteomes" id="UP000006548">
    <property type="component" value="Chromosome 1"/>
</dbReference>
<dbReference type="ExpressionAtlas" id="Q9C7T4">
    <property type="expression patterns" value="baseline and differential"/>
</dbReference>
<dbReference type="GO" id="GO:0005634">
    <property type="term" value="C:nucleus"/>
    <property type="evidence" value="ECO:0007669"/>
    <property type="project" value="UniProtKB-SubCell"/>
</dbReference>
<dbReference type="GO" id="GO:0003677">
    <property type="term" value="F:DNA binding"/>
    <property type="evidence" value="ECO:0007669"/>
    <property type="project" value="UniProtKB-KW"/>
</dbReference>
<dbReference type="GO" id="GO:0003700">
    <property type="term" value="F:DNA-binding transcription factor activity"/>
    <property type="evidence" value="ECO:0000250"/>
    <property type="project" value="TAIR"/>
</dbReference>
<dbReference type="GO" id="GO:0046983">
    <property type="term" value="F:protein dimerization activity"/>
    <property type="evidence" value="ECO:0007669"/>
    <property type="project" value="InterPro"/>
</dbReference>
<dbReference type="CDD" id="cd11448">
    <property type="entry name" value="bHLH_AtFAMA_like"/>
    <property type="match status" value="1"/>
</dbReference>
<dbReference type="Gene3D" id="4.10.280.10">
    <property type="entry name" value="Helix-loop-helix DNA-binding domain"/>
    <property type="match status" value="1"/>
</dbReference>
<dbReference type="InterPro" id="IPR002912">
    <property type="entry name" value="ACT_dom"/>
</dbReference>
<dbReference type="InterPro" id="IPR054502">
    <property type="entry name" value="bHLH-TF_ACT-like_plant"/>
</dbReference>
<dbReference type="InterPro" id="IPR011598">
    <property type="entry name" value="bHLH_dom"/>
</dbReference>
<dbReference type="InterPro" id="IPR036638">
    <property type="entry name" value="HLH_DNA-bd_sf"/>
</dbReference>
<dbReference type="PANTHER" id="PTHR11969">
    <property type="entry name" value="MAX DIMERIZATION, MAD"/>
    <property type="match status" value="1"/>
</dbReference>
<dbReference type="PANTHER" id="PTHR11969:SF82">
    <property type="entry name" value="TRANSCRIPTION FACTOR BHLH96"/>
    <property type="match status" value="1"/>
</dbReference>
<dbReference type="Pfam" id="PF22754">
    <property type="entry name" value="bHLH-TF_ACT-like_plant"/>
    <property type="match status" value="1"/>
</dbReference>
<dbReference type="Pfam" id="PF00010">
    <property type="entry name" value="HLH"/>
    <property type="match status" value="1"/>
</dbReference>
<dbReference type="SMART" id="SM00353">
    <property type="entry name" value="HLH"/>
    <property type="match status" value="1"/>
</dbReference>
<dbReference type="SUPFAM" id="SSF47459">
    <property type="entry name" value="HLH, helix-loop-helix DNA-binding domain"/>
    <property type="match status" value="1"/>
</dbReference>
<dbReference type="PROSITE" id="PS51671">
    <property type="entry name" value="ACT"/>
    <property type="match status" value="1"/>
</dbReference>
<dbReference type="PROSITE" id="PS50888">
    <property type="entry name" value="BHLH"/>
    <property type="match status" value="1"/>
</dbReference>
<sequence>MALEAVVYPQDPFSYISCKDFPFYDLYFQEEEDQDPQDTKNNIKLGQGQGHGFASNNYNGRTGDYSDDYNYNEEDLQWPRDLPYGSAVDTESQPPPSDVAAGGGRRKRRRTRSSKNKEEIENQRMTHIAVERNRRKQMNEYLAVLRSLMPPYYAQRGDQASIVGGAINYLKELEHHLQSMEPPVKTATEDTGAGHDQTKTTSASSSGPFSDFFAFPQYSNRPTSAAAAEGMAEIEVTMVESHASLKILAKKRPRQLLKLVSSIQSLRLTLLHLNVTTRDDSVLYSISVKVEEGSQLNTVEDIAAAVNQILRRIEEESSFS</sequence>
<accession>Q9C7T4</accession>
<reference key="1">
    <citation type="journal article" date="2003" name="Mol. Biol. Evol.">
        <title>The basic helix-loop-helix transcription factor family in plants: a genome-wide study of protein structure and functional diversity.</title>
        <authorList>
            <person name="Heim M.A."/>
            <person name="Jakoby M."/>
            <person name="Werber M."/>
            <person name="Martin C."/>
            <person name="Weisshaar B."/>
            <person name="Bailey P.C."/>
        </authorList>
    </citation>
    <scope>NUCLEOTIDE SEQUENCE [MRNA]</scope>
    <scope>TISSUE SPECIFICITY</scope>
    <scope>GENE FAMILY</scope>
    <scope>NOMENCLATURE</scope>
    <source>
        <strain>cv. Columbia</strain>
    </source>
</reference>
<reference key="2">
    <citation type="journal article" date="2000" name="Nature">
        <title>Sequence and analysis of chromosome 1 of the plant Arabidopsis thaliana.</title>
        <authorList>
            <person name="Theologis A."/>
            <person name="Ecker J.R."/>
            <person name="Palm C.J."/>
            <person name="Federspiel N.A."/>
            <person name="Kaul S."/>
            <person name="White O."/>
            <person name="Alonso J."/>
            <person name="Altafi H."/>
            <person name="Araujo R."/>
            <person name="Bowman C.L."/>
            <person name="Brooks S.Y."/>
            <person name="Buehler E."/>
            <person name="Chan A."/>
            <person name="Chao Q."/>
            <person name="Chen H."/>
            <person name="Cheuk R.F."/>
            <person name="Chin C.W."/>
            <person name="Chung M.K."/>
            <person name="Conn L."/>
            <person name="Conway A.B."/>
            <person name="Conway A.R."/>
            <person name="Creasy T.H."/>
            <person name="Dewar K."/>
            <person name="Dunn P."/>
            <person name="Etgu P."/>
            <person name="Feldblyum T.V."/>
            <person name="Feng J.-D."/>
            <person name="Fong B."/>
            <person name="Fujii C.Y."/>
            <person name="Gill J.E."/>
            <person name="Goldsmith A.D."/>
            <person name="Haas B."/>
            <person name="Hansen N.F."/>
            <person name="Hughes B."/>
            <person name="Huizar L."/>
            <person name="Hunter J.L."/>
            <person name="Jenkins J."/>
            <person name="Johnson-Hopson C."/>
            <person name="Khan S."/>
            <person name="Khaykin E."/>
            <person name="Kim C.J."/>
            <person name="Koo H.L."/>
            <person name="Kremenetskaia I."/>
            <person name="Kurtz D.B."/>
            <person name="Kwan A."/>
            <person name="Lam B."/>
            <person name="Langin-Hooper S."/>
            <person name="Lee A."/>
            <person name="Lee J.M."/>
            <person name="Lenz C.A."/>
            <person name="Li J.H."/>
            <person name="Li Y.-P."/>
            <person name="Lin X."/>
            <person name="Liu S.X."/>
            <person name="Liu Z.A."/>
            <person name="Luros J.S."/>
            <person name="Maiti R."/>
            <person name="Marziali A."/>
            <person name="Militscher J."/>
            <person name="Miranda M."/>
            <person name="Nguyen M."/>
            <person name="Nierman W.C."/>
            <person name="Osborne B.I."/>
            <person name="Pai G."/>
            <person name="Peterson J."/>
            <person name="Pham P.K."/>
            <person name="Rizzo M."/>
            <person name="Rooney T."/>
            <person name="Rowley D."/>
            <person name="Sakano H."/>
            <person name="Salzberg S.L."/>
            <person name="Schwartz J.R."/>
            <person name="Shinn P."/>
            <person name="Southwick A.M."/>
            <person name="Sun H."/>
            <person name="Tallon L.J."/>
            <person name="Tambunga G."/>
            <person name="Toriumi M.J."/>
            <person name="Town C.D."/>
            <person name="Utterback T."/>
            <person name="Van Aken S."/>
            <person name="Vaysberg M."/>
            <person name="Vysotskaia V.S."/>
            <person name="Walker M."/>
            <person name="Wu D."/>
            <person name="Yu G."/>
            <person name="Fraser C.M."/>
            <person name="Venter J.C."/>
            <person name="Davis R.W."/>
        </authorList>
    </citation>
    <scope>NUCLEOTIDE SEQUENCE [LARGE SCALE GENOMIC DNA]</scope>
    <source>
        <strain>cv. Columbia</strain>
    </source>
</reference>
<reference key="3">
    <citation type="journal article" date="2017" name="Plant J.">
        <title>Araport11: a complete reannotation of the Arabidopsis thaliana reference genome.</title>
        <authorList>
            <person name="Cheng C.Y."/>
            <person name="Krishnakumar V."/>
            <person name="Chan A.P."/>
            <person name="Thibaud-Nissen F."/>
            <person name="Schobel S."/>
            <person name="Town C.D."/>
        </authorList>
    </citation>
    <scope>GENOME REANNOTATION</scope>
    <source>
        <strain>cv. Columbia</strain>
    </source>
</reference>
<reference key="4">
    <citation type="journal article" date="2003" name="Science">
        <title>Empirical analysis of transcriptional activity in the Arabidopsis genome.</title>
        <authorList>
            <person name="Yamada K."/>
            <person name="Lim J."/>
            <person name="Dale J.M."/>
            <person name="Chen H."/>
            <person name="Shinn P."/>
            <person name="Palm C.J."/>
            <person name="Southwick A.M."/>
            <person name="Wu H.C."/>
            <person name="Kim C.J."/>
            <person name="Nguyen M."/>
            <person name="Pham P.K."/>
            <person name="Cheuk R.F."/>
            <person name="Karlin-Newmann G."/>
            <person name="Liu S.X."/>
            <person name="Lam B."/>
            <person name="Sakano H."/>
            <person name="Wu T."/>
            <person name="Yu G."/>
            <person name="Miranda M."/>
            <person name="Quach H.L."/>
            <person name="Tripp M."/>
            <person name="Chang C.H."/>
            <person name="Lee J.M."/>
            <person name="Toriumi M.J."/>
            <person name="Chan M.M."/>
            <person name="Tang C.C."/>
            <person name="Onodera C.S."/>
            <person name="Deng J.M."/>
            <person name="Akiyama K."/>
            <person name="Ansari Y."/>
            <person name="Arakawa T."/>
            <person name="Banh J."/>
            <person name="Banno F."/>
            <person name="Bowser L."/>
            <person name="Brooks S.Y."/>
            <person name="Carninci P."/>
            <person name="Chao Q."/>
            <person name="Choy N."/>
            <person name="Enju A."/>
            <person name="Goldsmith A.D."/>
            <person name="Gurjal M."/>
            <person name="Hansen N.F."/>
            <person name="Hayashizaki Y."/>
            <person name="Johnson-Hopson C."/>
            <person name="Hsuan V.W."/>
            <person name="Iida K."/>
            <person name="Karnes M."/>
            <person name="Khan S."/>
            <person name="Koesema E."/>
            <person name="Ishida J."/>
            <person name="Jiang P.X."/>
            <person name="Jones T."/>
            <person name="Kawai J."/>
            <person name="Kamiya A."/>
            <person name="Meyers C."/>
            <person name="Nakajima M."/>
            <person name="Narusaka M."/>
            <person name="Seki M."/>
            <person name="Sakurai T."/>
            <person name="Satou M."/>
            <person name="Tamse R."/>
            <person name="Vaysberg M."/>
            <person name="Wallender E.K."/>
            <person name="Wong C."/>
            <person name="Yamamura Y."/>
            <person name="Yuan S."/>
            <person name="Shinozaki K."/>
            <person name="Davis R.W."/>
            <person name="Theologis A."/>
            <person name="Ecker J.R."/>
        </authorList>
    </citation>
    <scope>NUCLEOTIDE SEQUENCE [LARGE SCALE MRNA]</scope>
    <source>
        <strain>cv. Columbia</strain>
    </source>
</reference>
<reference key="5">
    <citation type="journal article" date="2003" name="Plant Cell">
        <title>The Arabidopsis basic/helix-loop-helix transcription factor family.</title>
        <authorList>
            <person name="Toledo-Ortiz G."/>
            <person name="Huq E."/>
            <person name="Quail P.H."/>
        </authorList>
    </citation>
    <scope>GENE FAMILY</scope>
</reference>
<reference key="6">
    <citation type="journal article" date="2003" name="Plant Cell">
        <title>Update on the basic helix-loop-helix transcription factor gene family in Arabidopsis thaliana.</title>
        <authorList>
            <person name="Bailey P.C."/>
            <person name="Martin C."/>
            <person name="Toledo-Ortiz G."/>
            <person name="Quail P.H."/>
            <person name="Huq E."/>
            <person name="Heim M.A."/>
            <person name="Jakoby M."/>
            <person name="Werber M."/>
            <person name="Weisshaar B."/>
        </authorList>
    </citation>
    <scope>GENE FAMILY</scope>
    <scope>NOMENCLATURE</scope>
</reference>